<accession>B4RBX6</accession>
<proteinExistence type="inferred from homology"/>
<organism>
    <name type="scientific">Phenylobacterium zucineum (strain HLK1)</name>
    <dbReference type="NCBI Taxonomy" id="450851"/>
    <lineage>
        <taxon>Bacteria</taxon>
        <taxon>Pseudomonadati</taxon>
        <taxon>Pseudomonadota</taxon>
        <taxon>Alphaproteobacteria</taxon>
        <taxon>Caulobacterales</taxon>
        <taxon>Caulobacteraceae</taxon>
        <taxon>Phenylobacterium</taxon>
    </lineage>
</organism>
<feature type="chain" id="PRO_1000089583" description="LexA repressor">
    <location>
        <begin position="1"/>
        <end position="229"/>
    </location>
</feature>
<feature type="DNA-binding region" description="H-T-H motif" evidence="1">
    <location>
        <begin position="26"/>
        <end position="46"/>
    </location>
</feature>
<feature type="active site" description="For autocatalytic cleavage activity" evidence="1">
    <location>
        <position position="149"/>
    </location>
</feature>
<feature type="active site" description="For autocatalytic cleavage activity" evidence="1">
    <location>
        <position position="187"/>
    </location>
</feature>
<feature type="site" description="Cleavage; by autolysis" evidence="1">
    <location>
        <begin position="114"/>
        <end position="115"/>
    </location>
</feature>
<evidence type="ECO:0000255" key="1">
    <source>
        <dbReference type="HAMAP-Rule" id="MF_00015"/>
    </source>
</evidence>
<protein>
    <recommendedName>
        <fullName evidence="1">LexA repressor</fullName>
        <ecNumber evidence="1">3.4.21.88</ecNumber>
    </recommendedName>
</protein>
<comment type="function">
    <text evidence="1">Represses a number of genes involved in the response to DNA damage (SOS response), including recA and lexA. In the presence of single-stranded DNA, RecA interacts with LexA causing an autocatalytic cleavage which disrupts the DNA-binding part of LexA, leading to derepression of the SOS regulon and eventually DNA repair.</text>
</comment>
<comment type="catalytic activity">
    <reaction evidence="1">
        <text>Hydrolysis of Ala-|-Gly bond in repressor LexA.</text>
        <dbReference type="EC" id="3.4.21.88"/>
    </reaction>
</comment>
<comment type="subunit">
    <text evidence="1">Homodimer.</text>
</comment>
<comment type="similarity">
    <text evidence="1">Belongs to the peptidase S24 family.</text>
</comment>
<reference key="1">
    <citation type="journal article" date="2008" name="BMC Genomics">
        <title>Complete genome of Phenylobacterium zucineum - a novel facultative intracellular bacterium isolated from human erythroleukemia cell line K562.</title>
        <authorList>
            <person name="Luo Y."/>
            <person name="Xu X."/>
            <person name="Ding Z."/>
            <person name="Liu Z."/>
            <person name="Zhang B."/>
            <person name="Yan Z."/>
            <person name="Sun J."/>
            <person name="Hu S."/>
            <person name="Hu X."/>
        </authorList>
    </citation>
    <scope>NUCLEOTIDE SEQUENCE [LARGE SCALE GENOMIC DNA]</scope>
    <source>
        <strain>HLK1</strain>
    </source>
</reference>
<sequence>MLTRKQHELLMFIHERIKETGVSPSFDEMKEALDLASKSGIHRLITALEERGFLRRLPHRARALEVVRLPQQATAAAPPKGRAPFKPQLVEAGQAMPVAANDTRELPILGKIAAGTPIEAIQQERDRLPVPEAMLGAGEHFVLEIQGDSMINAGILDGDFVVIRRTDSANSGDIVVALVDGEEATLKRLRKKGASIALEAANPAYETRIFGPDRVAVQGRLVGLIRRYH</sequence>
<gene>
    <name evidence="1" type="primary">lexA</name>
    <name type="ordered locus">PHZ_c1762</name>
</gene>
<dbReference type="EC" id="3.4.21.88" evidence="1"/>
<dbReference type="EMBL" id="CP000747">
    <property type="protein sequence ID" value="ACG78173.1"/>
    <property type="molecule type" value="Genomic_DNA"/>
</dbReference>
<dbReference type="RefSeq" id="WP_012522315.1">
    <property type="nucleotide sequence ID" value="NC_011144.1"/>
</dbReference>
<dbReference type="SMR" id="B4RBX6"/>
<dbReference type="STRING" id="450851.PHZ_c1762"/>
<dbReference type="MEROPS" id="S24.001"/>
<dbReference type="KEGG" id="pzu:PHZ_c1762"/>
<dbReference type="eggNOG" id="COG1974">
    <property type="taxonomic scope" value="Bacteria"/>
</dbReference>
<dbReference type="HOGENOM" id="CLU_066192_45_2_5"/>
<dbReference type="OrthoDB" id="9802364at2"/>
<dbReference type="Proteomes" id="UP000001868">
    <property type="component" value="Chromosome"/>
</dbReference>
<dbReference type="GO" id="GO:0003677">
    <property type="term" value="F:DNA binding"/>
    <property type="evidence" value="ECO:0007669"/>
    <property type="project" value="UniProtKB-UniRule"/>
</dbReference>
<dbReference type="GO" id="GO:0004252">
    <property type="term" value="F:serine-type endopeptidase activity"/>
    <property type="evidence" value="ECO:0007669"/>
    <property type="project" value="UniProtKB-UniRule"/>
</dbReference>
<dbReference type="GO" id="GO:0006281">
    <property type="term" value="P:DNA repair"/>
    <property type="evidence" value="ECO:0007669"/>
    <property type="project" value="UniProtKB-UniRule"/>
</dbReference>
<dbReference type="GO" id="GO:0006260">
    <property type="term" value="P:DNA replication"/>
    <property type="evidence" value="ECO:0007669"/>
    <property type="project" value="UniProtKB-UniRule"/>
</dbReference>
<dbReference type="GO" id="GO:0045892">
    <property type="term" value="P:negative regulation of DNA-templated transcription"/>
    <property type="evidence" value="ECO:0007669"/>
    <property type="project" value="UniProtKB-UniRule"/>
</dbReference>
<dbReference type="GO" id="GO:0006508">
    <property type="term" value="P:proteolysis"/>
    <property type="evidence" value="ECO:0007669"/>
    <property type="project" value="InterPro"/>
</dbReference>
<dbReference type="GO" id="GO:0009432">
    <property type="term" value="P:SOS response"/>
    <property type="evidence" value="ECO:0007669"/>
    <property type="project" value="UniProtKB-UniRule"/>
</dbReference>
<dbReference type="CDD" id="cd06529">
    <property type="entry name" value="S24_LexA-like"/>
    <property type="match status" value="1"/>
</dbReference>
<dbReference type="FunFam" id="1.10.10.10:FF:000102">
    <property type="entry name" value="LexA repressor"/>
    <property type="match status" value="1"/>
</dbReference>
<dbReference type="FunFam" id="2.10.109.10:FF:000001">
    <property type="entry name" value="LexA repressor"/>
    <property type="match status" value="1"/>
</dbReference>
<dbReference type="Gene3D" id="2.10.109.10">
    <property type="entry name" value="Umud Fragment, subunit A"/>
    <property type="match status" value="1"/>
</dbReference>
<dbReference type="Gene3D" id="1.10.10.10">
    <property type="entry name" value="Winged helix-like DNA-binding domain superfamily/Winged helix DNA-binding domain"/>
    <property type="match status" value="1"/>
</dbReference>
<dbReference type="HAMAP" id="MF_00015">
    <property type="entry name" value="LexA"/>
    <property type="match status" value="1"/>
</dbReference>
<dbReference type="InterPro" id="IPR006200">
    <property type="entry name" value="LexA"/>
</dbReference>
<dbReference type="InterPro" id="IPR039418">
    <property type="entry name" value="LexA-like"/>
</dbReference>
<dbReference type="InterPro" id="IPR036286">
    <property type="entry name" value="LexA/Signal_pep-like_sf"/>
</dbReference>
<dbReference type="InterPro" id="IPR006199">
    <property type="entry name" value="LexA_DNA-bd_dom"/>
</dbReference>
<dbReference type="InterPro" id="IPR050077">
    <property type="entry name" value="LexA_repressor"/>
</dbReference>
<dbReference type="InterPro" id="IPR006197">
    <property type="entry name" value="Peptidase_S24_LexA"/>
</dbReference>
<dbReference type="InterPro" id="IPR015927">
    <property type="entry name" value="Peptidase_S24_S26A/B/C"/>
</dbReference>
<dbReference type="InterPro" id="IPR036388">
    <property type="entry name" value="WH-like_DNA-bd_sf"/>
</dbReference>
<dbReference type="InterPro" id="IPR036390">
    <property type="entry name" value="WH_DNA-bd_sf"/>
</dbReference>
<dbReference type="NCBIfam" id="TIGR00498">
    <property type="entry name" value="lexA"/>
    <property type="match status" value="1"/>
</dbReference>
<dbReference type="PANTHER" id="PTHR33516">
    <property type="entry name" value="LEXA REPRESSOR"/>
    <property type="match status" value="1"/>
</dbReference>
<dbReference type="PANTHER" id="PTHR33516:SF2">
    <property type="entry name" value="LEXA REPRESSOR-RELATED"/>
    <property type="match status" value="1"/>
</dbReference>
<dbReference type="Pfam" id="PF01726">
    <property type="entry name" value="LexA_DNA_bind"/>
    <property type="match status" value="1"/>
</dbReference>
<dbReference type="Pfam" id="PF00717">
    <property type="entry name" value="Peptidase_S24"/>
    <property type="match status" value="1"/>
</dbReference>
<dbReference type="PRINTS" id="PR00726">
    <property type="entry name" value="LEXASERPTASE"/>
</dbReference>
<dbReference type="SUPFAM" id="SSF51306">
    <property type="entry name" value="LexA/Signal peptidase"/>
    <property type="match status" value="1"/>
</dbReference>
<dbReference type="SUPFAM" id="SSF46785">
    <property type="entry name" value="Winged helix' DNA-binding domain"/>
    <property type="match status" value="1"/>
</dbReference>
<name>LEXA_PHEZH</name>
<keyword id="KW-0068">Autocatalytic cleavage</keyword>
<keyword id="KW-0227">DNA damage</keyword>
<keyword id="KW-0234">DNA repair</keyword>
<keyword id="KW-0235">DNA replication</keyword>
<keyword id="KW-0238">DNA-binding</keyword>
<keyword id="KW-0378">Hydrolase</keyword>
<keyword id="KW-1185">Reference proteome</keyword>
<keyword id="KW-0678">Repressor</keyword>
<keyword id="KW-0742">SOS response</keyword>
<keyword id="KW-0804">Transcription</keyword>
<keyword id="KW-0805">Transcription regulation</keyword>